<name>G1091_PHOV8</name>
<evidence type="ECO:0000250" key="1"/>
<evidence type="ECO:0000255" key="2">
    <source>
        <dbReference type="PROSITE-ProRule" id="PRU00303"/>
    </source>
</evidence>
<evidence type="ECO:0000305" key="3"/>
<comment type="function">
    <text evidence="1">Glycosidase.</text>
</comment>
<comment type="cofactor">
    <cofactor evidence="1">
        <name>NAD(+)</name>
        <dbReference type="ChEBI" id="CHEBI:57540"/>
    </cofactor>
    <text evidence="1">Binds 1 NAD(+) per subunit. The NAD(+) cannot dissociate.</text>
</comment>
<comment type="subcellular location">
    <subcellularLocation>
        <location evidence="2">Cell membrane</location>
        <topology evidence="2">Lipid-anchor</topology>
    </subcellularLocation>
</comment>
<comment type="similarity">
    <text evidence="3">Belongs to the Gfo/Idh/MocA family. Glycosyl hydrolase 109 subfamily.</text>
</comment>
<protein>
    <recommendedName>
        <fullName>Glycosyl hydrolase family 109 protein 1</fullName>
        <ecNumber>3.2.1.-</ecNumber>
    </recommendedName>
</protein>
<accession>A6KX96</accession>
<organism>
    <name type="scientific">Phocaeicola vulgatus (strain ATCC 8482 / DSM 1447 / JCM 5826 / CCUG 4940 / NBRC 14291 / NCTC 11154)</name>
    <name type="common">Bacteroides vulgatus</name>
    <dbReference type="NCBI Taxonomy" id="435590"/>
    <lineage>
        <taxon>Bacteria</taxon>
        <taxon>Pseudomonadati</taxon>
        <taxon>Bacteroidota</taxon>
        <taxon>Bacteroidia</taxon>
        <taxon>Bacteroidales</taxon>
        <taxon>Bacteroidaceae</taxon>
        <taxon>Phocaeicola</taxon>
    </lineage>
</organism>
<sequence length="471" mass="53449">MIKNLSTFFVGIALSCLAGCTPIPKETTATKEYAPLEVPVPERPAGQQDVIELTTPKLDTVRVGFIGLGMRGPSAVERWTHIPGTKIVALCDLLPENAEKAQKIVTNAGMEAPALYSGSEDAWKQLCERNDIDLVYIATDWKHHTEMGIYAMEHGKHAAIEVPAAMSLDEIWALINTSEKTRKHCMQLENCVYDFFELTTLNMAQKGLFGEVLHVEGSYIHNLEEFWPYYWNNWRLDYNREFRGDVYATHGLGPACQLLNIHRGDRMKTLVAMDTKAVTGPELVKQYQKEEAPDFQNGDHTMTFIRTENGKTIHIQHDVMNPRPYSRMYQLTGTKGFANKYPIEQYCFRPDQIDSTSIPDHENLSMHSAVPEKVKEALMSQYKHPIHQELEETAKKIGGHGGMDFIMDYRLVYCLRNGLPLDMDVYDLAEWCCMADLTRLSIENGNAPVAVPDFTRGNWNKVDGYHHAFAQ</sequence>
<gene>
    <name type="ordered locus">BVU_0340</name>
</gene>
<feature type="signal peptide" evidence="2">
    <location>
        <begin position="1"/>
        <end position="15"/>
    </location>
</feature>
<feature type="chain" id="PRO_0000348553" description="Glycosyl hydrolase family 109 protein 1">
    <location>
        <begin position="16"/>
        <end position="471"/>
    </location>
</feature>
<feature type="binding site" evidence="1">
    <location>
        <begin position="70"/>
        <end position="71"/>
    </location>
    <ligand>
        <name>NAD(+)</name>
        <dbReference type="ChEBI" id="CHEBI:57540"/>
    </ligand>
</feature>
<feature type="binding site" evidence="1">
    <location>
        <position position="92"/>
    </location>
    <ligand>
        <name>NAD(+)</name>
        <dbReference type="ChEBI" id="CHEBI:57540"/>
    </ligand>
</feature>
<feature type="binding site" evidence="1">
    <location>
        <begin position="141"/>
        <end position="144"/>
    </location>
    <ligand>
        <name>NAD(+)</name>
        <dbReference type="ChEBI" id="CHEBI:57540"/>
    </ligand>
</feature>
<feature type="binding site" evidence="1">
    <location>
        <begin position="161"/>
        <end position="162"/>
    </location>
    <ligand>
        <name>NAD(+)</name>
        <dbReference type="ChEBI" id="CHEBI:57540"/>
    </ligand>
</feature>
<feature type="binding site" evidence="1">
    <location>
        <position position="190"/>
    </location>
    <ligand>
        <name>NAD(+)</name>
        <dbReference type="ChEBI" id="CHEBI:57540"/>
    </ligand>
</feature>
<feature type="binding site" evidence="1">
    <location>
        <position position="219"/>
    </location>
    <ligand>
        <name>substrate</name>
    </ligand>
</feature>
<feature type="binding site" evidence="1">
    <location>
        <position position="235"/>
    </location>
    <ligand>
        <name>substrate</name>
    </ligand>
</feature>
<feature type="binding site" evidence="1">
    <location>
        <begin position="247"/>
        <end position="250"/>
    </location>
    <ligand>
        <name>substrate</name>
    </ligand>
</feature>
<feature type="binding site" evidence="1">
    <location>
        <position position="247"/>
    </location>
    <ligand>
        <name>NAD(+)</name>
        <dbReference type="ChEBI" id="CHEBI:57540"/>
    </ligand>
</feature>
<feature type="binding site" evidence="1">
    <location>
        <position position="325"/>
    </location>
    <ligand>
        <name>substrate</name>
    </ligand>
</feature>
<feature type="lipid moiety-binding region" description="N-palmitoyl cysteine" evidence="2">
    <location>
        <position position="16"/>
    </location>
</feature>
<feature type="lipid moiety-binding region" description="S-diacylglycerol cysteine" evidence="2">
    <location>
        <position position="16"/>
    </location>
</feature>
<keyword id="KW-1003">Cell membrane</keyword>
<keyword id="KW-0326">Glycosidase</keyword>
<keyword id="KW-0378">Hydrolase</keyword>
<keyword id="KW-0449">Lipoprotein</keyword>
<keyword id="KW-0472">Membrane</keyword>
<keyword id="KW-0520">NAD</keyword>
<keyword id="KW-0564">Palmitate</keyword>
<keyword id="KW-0732">Signal</keyword>
<dbReference type="EC" id="3.2.1.-"/>
<dbReference type="EMBL" id="CP000139">
    <property type="protein sequence ID" value="ABR38060.1"/>
    <property type="molecule type" value="Genomic_DNA"/>
</dbReference>
<dbReference type="RefSeq" id="WP_011964715.1">
    <property type="nucleotide sequence ID" value="NZ_JANSWM010000026.1"/>
</dbReference>
<dbReference type="SMR" id="A6KX96"/>
<dbReference type="STRING" id="435590.BVU_0340"/>
<dbReference type="CAZy" id="GH109">
    <property type="family name" value="Glycoside Hydrolase Family 109"/>
</dbReference>
<dbReference type="PaxDb" id="435590-BVU_0340"/>
<dbReference type="GeneID" id="5301309"/>
<dbReference type="KEGG" id="bvu:BVU_0340"/>
<dbReference type="eggNOG" id="COG0673">
    <property type="taxonomic scope" value="Bacteria"/>
</dbReference>
<dbReference type="HOGENOM" id="CLU_046965_0_0_10"/>
<dbReference type="BioCyc" id="BVUL435590:G1G59-358-MONOMER"/>
<dbReference type="Proteomes" id="UP000002861">
    <property type="component" value="Chromosome"/>
</dbReference>
<dbReference type="GO" id="GO:0005886">
    <property type="term" value="C:plasma membrane"/>
    <property type="evidence" value="ECO:0007669"/>
    <property type="project" value="UniProtKB-SubCell"/>
</dbReference>
<dbReference type="GO" id="GO:0016798">
    <property type="term" value="F:hydrolase activity, acting on glycosyl bonds"/>
    <property type="evidence" value="ECO:0007669"/>
    <property type="project" value="UniProtKB-KW"/>
</dbReference>
<dbReference type="GO" id="GO:0000166">
    <property type="term" value="F:nucleotide binding"/>
    <property type="evidence" value="ECO:0007669"/>
    <property type="project" value="InterPro"/>
</dbReference>
<dbReference type="Gene3D" id="3.30.360.10">
    <property type="entry name" value="Dihydrodipicolinate Reductase, domain 2"/>
    <property type="match status" value="1"/>
</dbReference>
<dbReference type="Gene3D" id="3.40.50.720">
    <property type="entry name" value="NAD(P)-binding Rossmann-like Domain"/>
    <property type="match status" value="1"/>
</dbReference>
<dbReference type="InterPro" id="IPR000683">
    <property type="entry name" value="Gfo/Idh/MocA-like_OxRdtase_N"/>
</dbReference>
<dbReference type="InterPro" id="IPR050463">
    <property type="entry name" value="Gfo/Idh/MocA_oxidrdct_glycsds"/>
</dbReference>
<dbReference type="InterPro" id="IPR049303">
    <property type="entry name" value="Glyco_hydro_109_C"/>
</dbReference>
<dbReference type="InterPro" id="IPR036291">
    <property type="entry name" value="NAD(P)-bd_dom_sf"/>
</dbReference>
<dbReference type="PANTHER" id="PTHR43818">
    <property type="entry name" value="BCDNA.GH03377"/>
    <property type="match status" value="1"/>
</dbReference>
<dbReference type="PANTHER" id="PTHR43818:SF1">
    <property type="entry name" value="GLYCOSYL HYDROLASE FAMILY 109 PROTEIN"/>
    <property type="match status" value="1"/>
</dbReference>
<dbReference type="Pfam" id="PF01408">
    <property type="entry name" value="GFO_IDH_MocA"/>
    <property type="match status" value="1"/>
</dbReference>
<dbReference type="Pfam" id="PF21252">
    <property type="entry name" value="Glyco_hydro_109_C"/>
    <property type="match status" value="1"/>
</dbReference>
<dbReference type="SUPFAM" id="SSF55347">
    <property type="entry name" value="Glyceraldehyde-3-phosphate dehydrogenase-like, C-terminal domain"/>
    <property type="match status" value="1"/>
</dbReference>
<dbReference type="SUPFAM" id="SSF51735">
    <property type="entry name" value="NAD(P)-binding Rossmann-fold domains"/>
    <property type="match status" value="1"/>
</dbReference>
<dbReference type="PROSITE" id="PS51257">
    <property type="entry name" value="PROKAR_LIPOPROTEIN"/>
    <property type="match status" value="1"/>
</dbReference>
<reference key="1">
    <citation type="journal article" date="2007" name="PLoS Biol.">
        <title>Evolution of symbiotic bacteria in the distal human intestine.</title>
        <authorList>
            <person name="Xu J."/>
            <person name="Mahowald M.A."/>
            <person name="Ley R.E."/>
            <person name="Lozupone C.A."/>
            <person name="Hamady M."/>
            <person name="Martens E.C."/>
            <person name="Henrissat B."/>
            <person name="Coutinho P.M."/>
            <person name="Minx P."/>
            <person name="Latreille P."/>
            <person name="Cordum H."/>
            <person name="Van Brunt A."/>
            <person name="Kim K."/>
            <person name="Fulton R.S."/>
            <person name="Fulton L.A."/>
            <person name="Clifton S.W."/>
            <person name="Wilson R.K."/>
            <person name="Knight R.D."/>
            <person name="Gordon J.I."/>
        </authorList>
    </citation>
    <scope>NUCLEOTIDE SEQUENCE [LARGE SCALE GENOMIC DNA]</scope>
    <source>
        <strain>ATCC 8482 / DSM 1447 / JCM 5826 / CCUG 4940 / NBRC 14291 / NCTC 11154</strain>
    </source>
</reference>
<proteinExistence type="inferred from homology"/>